<feature type="chain" id="PRO_0000289577" description="Tyrosine 3-monooxygenase">
    <location>
        <begin position="1"/>
        <end position="495"/>
    </location>
</feature>
<feature type="region of interest" description="Disordered" evidence="4">
    <location>
        <begin position="41"/>
        <end position="65"/>
    </location>
</feature>
<feature type="compositionally biased region" description="Basic and acidic residues" evidence="4">
    <location>
        <begin position="41"/>
        <end position="53"/>
    </location>
</feature>
<feature type="binding site" evidence="1">
    <location>
        <position position="328"/>
    </location>
    <ligand>
        <name>Fe cation</name>
        <dbReference type="ChEBI" id="CHEBI:24875"/>
    </ligand>
</feature>
<feature type="binding site" evidence="1">
    <location>
        <position position="333"/>
    </location>
    <ligand>
        <name>Fe cation</name>
        <dbReference type="ChEBI" id="CHEBI:24875"/>
    </ligand>
</feature>
<feature type="binding site" evidence="1">
    <location>
        <position position="373"/>
    </location>
    <ligand>
        <name>Fe cation</name>
        <dbReference type="ChEBI" id="CHEBI:24875"/>
    </ligand>
</feature>
<feature type="site" description="Important for substrate specificity" evidence="1">
    <location>
        <position position="422"/>
    </location>
</feature>
<feature type="modified residue" description="Phosphoserine; by CaMK2" evidence="2">
    <location>
        <position position="19"/>
    </location>
</feature>
<feature type="modified residue" description="Phosphoserine" evidence="3">
    <location>
        <position position="31"/>
    </location>
</feature>
<feature type="modified residue" description="Phosphoserine; by CaMK2 and PKA" evidence="2">
    <location>
        <position position="40"/>
    </location>
</feature>
<feature type="modified residue" description="Phosphoserine" evidence="3">
    <location>
        <position position="469"/>
    </location>
</feature>
<feature type="sequence variant" evidence="5">
    <original>R</original>
    <variation>C</variation>
    <location>
        <position position="33"/>
    </location>
</feature>
<protein>
    <recommendedName>
        <fullName>Tyrosine 3-monooxygenase</fullName>
        <ecNumber evidence="2">1.14.16.2</ecNumber>
    </recommendedName>
    <alternativeName>
        <fullName>Tyrosine 3-hydroxylase</fullName>
        <shortName>TH</shortName>
    </alternativeName>
</protein>
<sequence>MPTPNTASPQAKGFRRAVSELDAKQAEAIMSPRFIGRRQSLIEDARKEREKAEAASAASSEPGDLLEAAVSKEKDGKAMLNLLFTLRGAKTSSLSRAVKAFETFEAQIHHLETRPVQRPRAGGPHLEYFVRCEVPSADLPALLSSVRRVAEDVRGAGENKVLWFPRKVSELDKCHHLVTKFDPDLDLDHPGFSDQVYRQRRKLIAEIAFQYKHGDPIPRVEYTAEEIATWKEVYTTLKSLYVTHACREHLEAFQLLERFSGYREDSIPQLEDVSRFLKERTGFQLRPVAGLLSARDFLASLAFRVFQCTQYIRHASSPMHSPEPDCCHELLGHVPMLADRTFAQFSQDIGLASLGASDEEIEKLSTLYWFTVEFGLCKQNGEVKAYGAGLLSSYGELLHSLSEEPEIRAFDPDAAAVQPYQDQTYQSVYFVSESFSDAKDKLRNYASRIQRPFSVKFDPYTLAIDVLDSPHAIRRSLEGVQDELHTLAHALSAIG</sequence>
<keyword id="KW-0127">Catecholamine biosynthesis</keyword>
<keyword id="KW-0966">Cell projection</keyword>
<keyword id="KW-0963">Cytoplasm</keyword>
<keyword id="KW-0968">Cytoplasmic vesicle</keyword>
<keyword id="KW-0408">Iron</keyword>
<keyword id="KW-0479">Metal-binding</keyword>
<keyword id="KW-0503">Monooxygenase</keyword>
<keyword id="KW-0530">Neurotransmitter biosynthesis</keyword>
<keyword id="KW-0539">Nucleus</keyword>
<keyword id="KW-0560">Oxidoreductase</keyword>
<keyword id="KW-0597">Phosphoprotein</keyword>
<keyword id="KW-1185">Reference proteome</keyword>
<keyword id="KW-0770">Synapse</keyword>
<reference key="1">
    <citation type="journal article" date="2005" name="J. Vet. Med. Sci.">
        <title>Canine tyrosine hydroxylase (TH) gene and dopamine beta-hydroxylase (DBH) gene: their sequences, genetic polymorphisms, and diversities among five different dog breeds.</title>
        <authorList>
            <person name="Takeuchi Y."/>
            <person name="Hashizume C."/>
            <person name="Chon E.M.H."/>
            <person name="Momozawa Y."/>
            <person name="Masuda K."/>
            <person name="Kikusui T."/>
            <person name="Mori Y."/>
        </authorList>
    </citation>
    <scope>NUCLEOTIDE SEQUENCE [MRNA]</scope>
    <scope>VARIANT CYS-33</scope>
    <source>
        <strain>Beagle</strain>
        <tissue>Brain</tissue>
    </source>
</reference>
<evidence type="ECO:0000250" key="1">
    <source>
        <dbReference type="UniProtKB" id="P04177"/>
    </source>
</evidence>
<evidence type="ECO:0000250" key="2">
    <source>
        <dbReference type="UniProtKB" id="P07101"/>
    </source>
</evidence>
<evidence type="ECO:0000250" key="3">
    <source>
        <dbReference type="UniProtKB" id="P24529"/>
    </source>
</evidence>
<evidence type="ECO:0000256" key="4">
    <source>
        <dbReference type="SAM" id="MobiDB-lite"/>
    </source>
</evidence>
<evidence type="ECO:0000269" key="5">
    <source>
    </source>
</evidence>
<evidence type="ECO:0000305" key="6"/>
<comment type="function">
    <text evidence="1 2 3">Catalyzes the conversion of L-tyrosine to L-dihydroxyphenylalanine (L-Dopa), the rate-limiting step in the biosynthesis of cathecolamines, dopamine, noradrenaline, and adrenaline. Uses tetrahydrobiopterin and molecular oxygen to convert tyrosine to L-Dopa (By similarity). In addition to tyrosine, is able to catalyze the hydroxylation of phenylalanine and tryptophan with lower specificity (By similarity). Positively regulates the regression of retinal hyaloid vessels during postnatal development (By similarity).</text>
</comment>
<comment type="catalytic activity">
    <reaction evidence="2">
        <text>(6R)-L-erythro-5,6,7,8-tetrahydrobiopterin + L-tyrosine + O2 = (4aS,6R)-4a-hydroxy-L-erythro-5,6,7,8-tetrahydrobiopterin + L-dopa</text>
        <dbReference type="Rhea" id="RHEA:18201"/>
        <dbReference type="ChEBI" id="CHEBI:15379"/>
        <dbReference type="ChEBI" id="CHEBI:15642"/>
        <dbReference type="ChEBI" id="CHEBI:57504"/>
        <dbReference type="ChEBI" id="CHEBI:58315"/>
        <dbReference type="ChEBI" id="CHEBI:59560"/>
        <dbReference type="EC" id="1.14.16.2"/>
    </reaction>
    <physiologicalReaction direction="left-to-right" evidence="2">
        <dbReference type="Rhea" id="RHEA:18202"/>
    </physiologicalReaction>
</comment>
<comment type="cofactor">
    <cofactor evidence="1">
        <name>Fe(2+)</name>
        <dbReference type="ChEBI" id="CHEBI:29033"/>
    </cofactor>
</comment>
<comment type="activity regulation">
    <text evidence="2">Inhibited in feedback fashion by the catecholamine neurotransmitters, especially by dopamine in competition with tetrahydrobiopterin. Phosphorylation of several Ser/Thr residues in the N-terminus regulates the catalytic activity. Ser-31 and Ser-40 are readily phosphorylated to activate the catalytic activity. A Cysteine modification induced by N-ethylmaleimide (NEM), inhibits tyrosine 3-monooxygenase activity through the modification of the Cys-174.</text>
</comment>
<comment type="pathway">
    <text evidence="2">Catecholamine biosynthesis; dopamine biosynthesis; dopamine from L-tyrosine: step 1/2.</text>
</comment>
<comment type="subunit">
    <text evidence="2">Homotetramer (By similarity). Interacts (when phosphorylated at Ser-19) with YWHAG; one YWHAG dimer bounds to one TH tetramer this interaction may influence the phosphorylation and dephosphorylation of other sites (By similarity).</text>
</comment>
<comment type="subcellular location">
    <subcellularLocation>
        <location evidence="3">Cytoplasm</location>
        <location evidence="3">Perinuclear region</location>
    </subcellularLocation>
    <subcellularLocation>
        <location evidence="1">Nucleus</location>
    </subcellularLocation>
    <subcellularLocation>
        <location evidence="3">Cell projection</location>
        <location evidence="3">Axon</location>
    </subcellularLocation>
    <subcellularLocation>
        <location evidence="1">Cytoplasm</location>
    </subcellularLocation>
    <subcellularLocation>
        <location evidence="1">Cytoplasmic vesicle</location>
        <location evidence="1">Secretory vesicle</location>
        <location evidence="1">Synaptic vesicle</location>
    </subcellularLocation>
    <text evidence="1 2">When phosphorylated at Ser-19 shows a nuclear distribution and when phosphorylated at Ser-31 as well at Ser-40 shows a cytosolic distribution (By similarity). Expressed in dopaminergic axons and axon terminals (By similarity).</text>
</comment>
<comment type="PTM">
    <text evidence="1 2">Phosphorylated on Ser-19, Ser-31 and Ser-40 by several protein kinases with different site specificities. Phosphorylation at Ser-31 and Ser-40 leads to an increase of TH activity. Phosphorylation at Ser-40 activates the enzyme and also counteracts the feedback inhibition of TH by catecholamines (By similarity). Phosphorylation of Ser-19 and Ser-31 triggers the proteasomal degradation of TH through the ubiquitin-proteasome pathway (By similarity). Phosphorylation at Ser-31 facilitates transport of TH from the soma to the nerve terminals via the microtubule network (By similarity). Phosphorylation at Ser-19 induces the high-affinity binding to the 14-3-3 protein YWHAG; this interaction may influence the phosphorylation and dephosphorylation of other sites (By similarity). Ser-19 increases the phosphorylation at Ser-40 in a hierarchical manner, leading to increased activity (By similarity).</text>
</comment>
<comment type="similarity">
    <text evidence="6">Belongs to the biopterin-dependent aromatic amino acid hydroxylase family.</text>
</comment>
<proteinExistence type="evidence at transcript level"/>
<organism>
    <name type="scientific">Canis lupus familiaris</name>
    <name type="common">Dog</name>
    <name type="synonym">Canis familiaris</name>
    <dbReference type="NCBI Taxonomy" id="9615"/>
    <lineage>
        <taxon>Eukaryota</taxon>
        <taxon>Metazoa</taxon>
        <taxon>Chordata</taxon>
        <taxon>Craniata</taxon>
        <taxon>Vertebrata</taxon>
        <taxon>Euteleostomi</taxon>
        <taxon>Mammalia</taxon>
        <taxon>Eutheria</taxon>
        <taxon>Laurasiatheria</taxon>
        <taxon>Carnivora</taxon>
        <taxon>Caniformia</taxon>
        <taxon>Canidae</taxon>
        <taxon>Canis</taxon>
    </lineage>
</organism>
<gene>
    <name type="primary">TH</name>
</gene>
<dbReference type="EC" id="1.14.16.2" evidence="2"/>
<dbReference type="EMBL" id="AB097058">
    <property type="protein sequence ID" value="BAC82588.1"/>
    <property type="molecule type" value="mRNA"/>
</dbReference>
<dbReference type="RefSeq" id="NP_001002966.1">
    <property type="nucleotide sequence ID" value="NM_001002966.1"/>
</dbReference>
<dbReference type="SMR" id="Q76IQ3"/>
<dbReference type="FunCoup" id="Q76IQ3">
    <property type="interactions" value="4"/>
</dbReference>
<dbReference type="STRING" id="9615.ENSCAFP00000014845"/>
<dbReference type="PaxDb" id="9612-ENSCAFP00000014845"/>
<dbReference type="GeneID" id="403444"/>
<dbReference type="KEGG" id="cfa:403444"/>
<dbReference type="CTD" id="7054"/>
<dbReference type="eggNOG" id="KOG3820">
    <property type="taxonomic scope" value="Eukaryota"/>
</dbReference>
<dbReference type="InParanoid" id="Q76IQ3"/>
<dbReference type="OrthoDB" id="983542at2759"/>
<dbReference type="UniPathway" id="UPA00747">
    <property type="reaction ID" value="UER00733"/>
</dbReference>
<dbReference type="Proteomes" id="UP000002254">
    <property type="component" value="Unplaced"/>
</dbReference>
<dbReference type="Proteomes" id="UP000694429">
    <property type="component" value="Unplaced"/>
</dbReference>
<dbReference type="Proteomes" id="UP000694542">
    <property type="component" value="Unplaced"/>
</dbReference>
<dbReference type="Proteomes" id="UP000805418">
    <property type="component" value="Unplaced"/>
</dbReference>
<dbReference type="GO" id="GO:0030424">
    <property type="term" value="C:axon"/>
    <property type="evidence" value="ECO:0000318"/>
    <property type="project" value="GO_Central"/>
</dbReference>
<dbReference type="GO" id="GO:0005737">
    <property type="term" value="C:cytoplasm"/>
    <property type="evidence" value="ECO:0000250"/>
    <property type="project" value="UniProtKB"/>
</dbReference>
<dbReference type="GO" id="GO:0005634">
    <property type="term" value="C:nucleus"/>
    <property type="evidence" value="ECO:0000250"/>
    <property type="project" value="UniProtKB"/>
</dbReference>
<dbReference type="GO" id="GO:0043204">
    <property type="term" value="C:perikaryon"/>
    <property type="evidence" value="ECO:0000318"/>
    <property type="project" value="GO_Central"/>
</dbReference>
<dbReference type="GO" id="GO:0048471">
    <property type="term" value="C:perinuclear region of cytoplasm"/>
    <property type="evidence" value="ECO:0000250"/>
    <property type="project" value="UniProtKB"/>
</dbReference>
<dbReference type="GO" id="GO:0008021">
    <property type="term" value="C:synaptic vesicle"/>
    <property type="evidence" value="ECO:0007669"/>
    <property type="project" value="UniProtKB-SubCell"/>
</dbReference>
<dbReference type="GO" id="GO:0005506">
    <property type="term" value="F:iron ion binding"/>
    <property type="evidence" value="ECO:0007669"/>
    <property type="project" value="InterPro"/>
</dbReference>
<dbReference type="GO" id="GO:0004511">
    <property type="term" value="F:tyrosine 3-monooxygenase activity"/>
    <property type="evidence" value="ECO:0000318"/>
    <property type="project" value="GO_Central"/>
</dbReference>
<dbReference type="GO" id="GO:0006585">
    <property type="term" value="P:dopamine biosynthetic process from tyrosine"/>
    <property type="evidence" value="ECO:0000318"/>
    <property type="project" value="GO_Central"/>
</dbReference>
<dbReference type="GO" id="GO:0007507">
    <property type="term" value="P:heart development"/>
    <property type="evidence" value="ECO:0000318"/>
    <property type="project" value="GO_Central"/>
</dbReference>
<dbReference type="GO" id="GO:1990384">
    <property type="term" value="P:hyaloid vascular plexus regression"/>
    <property type="evidence" value="ECO:0000250"/>
    <property type="project" value="UniProtKB"/>
</dbReference>
<dbReference type="GO" id="GO:0045471">
    <property type="term" value="P:response to ethanol"/>
    <property type="evidence" value="ECO:0000318"/>
    <property type="project" value="GO_Central"/>
</dbReference>
<dbReference type="GO" id="GO:0001666">
    <property type="term" value="P:response to hypoxia"/>
    <property type="evidence" value="ECO:0000318"/>
    <property type="project" value="GO_Central"/>
</dbReference>
<dbReference type="CDD" id="cd03345">
    <property type="entry name" value="eu_TyrOH"/>
    <property type="match status" value="1"/>
</dbReference>
<dbReference type="FunFam" id="1.10.800.10:FF:000002">
    <property type="entry name" value="Tyrosine 3-monooxygenase"/>
    <property type="match status" value="1"/>
</dbReference>
<dbReference type="FunFam" id="3.30.70.260:FF:000024">
    <property type="entry name" value="Tyrosine 3-monooxygenase"/>
    <property type="match status" value="1"/>
</dbReference>
<dbReference type="Gene3D" id="3.30.70.260">
    <property type="match status" value="1"/>
</dbReference>
<dbReference type="Gene3D" id="1.10.800.10">
    <property type="entry name" value="Aromatic amino acid hydroxylase"/>
    <property type="match status" value="1"/>
</dbReference>
<dbReference type="InterPro" id="IPR045865">
    <property type="entry name" value="ACT-like_dom_sf"/>
</dbReference>
<dbReference type="InterPro" id="IPR001273">
    <property type="entry name" value="ArAA_hydroxylase"/>
</dbReference>
<dbReference type="InterPro" id="IPR018301">
    <property type="entry name" value="ArAA_hydroxylase_Fe/CU_BS"/>
</dbReference>
<dbReference type="InterPro" id="IPR036951">
    <property type="entry name" value="ArAA_hydroxylase_sf"/>
</dbReference>
<dbReference type="InterPro" id="IPR036329">
    <property type="entry name" value="Aro-AA_hydroxylase_C_sf"/>
</dbReference>
<dbReference type="InterPro" id="IPR019774">
    <property type="entry name" value="Aromatic-AA_hydroxylase_C"/>
</dbReference>
<dbReference type="InterPro" id="IPR041903">
    <property type="entry name" value="Eu_TyrOH_cat"/>
</dbReference>
<dbReference type="InterPro" id="IPR049321">
    <property type="entry name" value="TH_ACT"/>
</dbReference>
<dbReference type="InterPro" id="IPR005962">
    <property type="entry name" value="Tyr_3_mOase"/>
</dbReference>
<dbReference type="InterPro" id="IPR019773">
    <property type="entry name" value="Tyrosine_3-monooxygenase-like"/>
</dbReference>
<dbReference type="InterPro" id="IPR021164">
    <property type="entry name" value="Tyrosine_hydroxylase_CS"/>
</dbReference>
<dbReference type="NCBIfam" id="TIGR01269">
    <property type="entry name" value="Tyr_3_monoox"/>
    <property type="match status" value="1"/>
</dbReference>
<dbReference type="PANTHER" id="PTHR11473">
    <property type="entry name" value="AROMATIC AMINO ACID HYDROXYLASE"/>
    <property type="match status" value="1"/>
</dbReference>
<dbReference type="PANTHER" id="PTHR11473:SF18">
    <property type="entry name" value="TYROSINE 3-MONOOXYGENASE"/>
    <property type="match status" value="1"/>
</dbReference>
<dbReference type="Pfam" id="PF00351">
    <property type="entry name" value="Biopterin_H"/>
    <property type="match status" value="1"/>
</dbReference>
<dbReference type="Pfam" id="PF21417">
    <property type="entry name" value="TH_ACT"/>
    <property type="match status" value="1"/>
</dbReference>
<dbReference type="Pfam" id="PF12549">
    <property type="entry name" value="TOH_N"/>
    <property type="match status" value="2"/>
</dbReference>
<dbReference type="PIRSF" id="PIRSF000336">
    <property type="entry name" value="TH"/>
    <property type="match status" value="1"/>
</dbReference>
<dbReference type="PRINTS" id="PR00372">
    <property type="entry name" value="FYWHYDRXLASE"/>
</dbReference>
<dbReference type="SUPFAM" id="SSF55021">
    <property type="entry name" value="ACT-like"/>
    <property type="match status" value="1"/>
</dbReference>
<dbReference type="SUPFAM" id="SSF56534">
    <property type="entry name" value="Aromatic aminoacid monoxygenases, catalytic and oligomerization domains"/>
    <property type="match status" value="1"/>
</dbReference>
<dbReference type="PROSITE" id="PS00367">
    <property type="entry name" value="BH4_AAA_HYDROXYL_1"/>
    <property type="match status" value="1"/>
</dbReference>
<dbReference type="PROSITE" id="PS51410">
    <property type="entry name" value="BH4_AAA_HYDROXYL_2"/>
    <property type="match status" value="1"/>
</dbReference>
<name>TY3H_CANLF</name>
<accession>Q76IQ3</accession>